<sequence>MKRLISCLTIICALNASAAAETTSNPCSRWISFLKPVCQRIHQTWAEGHDDMYFSGYAWHNRYVYSNEKIKSYNETAWGGGLGKSLFDEKGNWHGLYAIAFLDSHRHLEPAVGYAYLKTASVNKDLKAGLGYSVLVTSRVDYDNVPIPGALPWAALFYKRITIAATYIPGSSREGHENGNVLYMLGKISL</sequence>
<name>PAGP_LEGP2</name>
<feature type="signal peptide" evidence="1">
    <location>
        <begin position="1"/>
        <end position="18"/>
    </location>
</feature>
<feature type="chain" id="PRO_0000414462" description="Lipid A acyltransferase PagP">
    <location>
        <begin position="19"/>
        <end position="190"/>
    </location>
</feature>
<feature type="active site" evidence="1">
    <location>
        <position position="60"/>
    </location>
</feature>
<feature type="active site" evidence="1">
    <location>
        <position position="103"/>
    </location>
</feature>
<feature type="active site" evidence="1">
    <location>
        <position position="104"/>
    </location>
</feature>
<feature type="site" description="Role in lipopolysaccharide recognition" evidence="1">
    <location>
        <position position="69"/>
    </location>
</feature>
<keyword id="KW-0012">Acyltransferase</keyword>
<keyword id="KW-0998">Cell outer membrane</keyword>
<keyword id="KW-0472">Membrane</keyword>
<keyword id="KW-0732">Signal</keyword>
<keyword id="KW-0808">Transferase</keyword>
<comment type="function">
    <text evidence="1">Transfers a fatty acid residue from the sn-1 position of a phospholipid to the N-linked hydroxyfatty acid chain on the proximal unit of lipid A or its precursors.</text>
</comment>
<comment type="catalytic activity">
    <reaction evidence="1">
        <text>a lipid A + a 1,2-diacyl-sn-glycero-3-phosphocholine = a hepta-acyl lipid A + a 2-acyl-sn-glycero-3-phosphocholine</text>
        <dbReference type="Rhea" id="RHEA:74275"/>
        <dbReference type="ChEBI" id="CHEBI:57643"/>
        <dbReference type="ChEBI" id="CHEBI:57875"/>
        <dbReference type="ChEBI" id="CHEBI:193141"/>
        <dbReference type="ChEBI" id="CHEBI:193142"/>
        <dbReference type="EC" id="2.3.1.251"/>
    </reaction>
</comment>
<comment type="catalytic activity">
    <reaction evidence="1">
        <text>a lipid IVA + a 1,2-diacyl-sn-glycero-3-phosphocholine = a lipid IVB + a 2-acyl-sn-glycero-3-phosphocholine</text>
        <dbReference type="Rhea" id="RHEA:74279"/>
        <dbReference type="ChEBI" id="CHEBI:57643"/>
        <dbReference type="ChEBI" id="CHEBI:57875"/>
        <dbReference type="ChEBI" id="CHEBI:176425"/>
        <dbReference type="ChEBI" id="CHEBI:193143"/>
        <dbReference type="EC" id="2.3.1.251"/>
    </reaction>
</comment>
<comment type="catalytic activity">
    <reaction evidence="1">
        <text>a lipid IIA + a 1,2-diacyl-sn-glycero-3-phosphocholine = a lipid IIB + a 2-acyl-sn-glycero-3-phosphocholine</text>
        <dbReference type="Rhea" id="RHEA:74283"/>
        <dbReference type="ChEBI" id="CHEBI:57643"/>
        <dbReference type="ChEBI" id="CHEBI:57875"/>
        <dbReference type="ChEBI" id="CHEBI:193144"/>
        <dbReference type="ChEBI" id="CHEBI:193145"/>
        <dbReference type="EC" id="2.3.1.251"/>
    </reaction>
</comment>
<comment type="subunit">
    <text evidence="1">Homodimer.</text>
</comment>
<comment type="subcellular location">
    <subcellularLocation>
        <location evidence="1">Cell outer membrane</location>
    </subcellularLocation>
</comment>
<comment type="similarity">
    <text evidence="1">Belongs to the lipid A palmitoyltransferase family.</text>
</comment>
<proteinExistence type="inferred from homology"/>
<evidence type="ECO:0000255" key="1">
    <source>
        <dbReference type="HAMAP-Rule" id="MF_00837"/>
    </source>
</evidence>
<reference key="1">
    <citation type="journal article" date="2010" name="BMC Genomics">
        <title>Legionella pneumophila pangenome reveals strain-specific virulence factors.</title>
        <authorList>
            <person name="D'Auria G."/>
            <person name="Jimenez-Hernandez N."/>
            <person name="Peris-Bondia F."/>
            <person name="Moya A."/>
            <person name="Latorre A."/>
        </authorList>
    </citation>
    <scope>NUCLEOTIDE SEQUENCE [LARGE SCALE GENOMIC DNA]</scope>
    <source>
        <strain>2300/99 Alcoy</strain>
    </source>
</reference>
<accession>D5T5P7</accession>
<protein>
    <recommendedName>
        <fullName evidence="1">Lipid A acyltransferase PagP</fullName>
        <ecNumber evidence="1">2.3.1.251</ecNumber>
    </recommendedName>
    <alternativeName>
        <fullName evidence="1">Lipid A acylation protein</fullName>
    </alternativeName>
</protein>
<dbReference type="EC" id="2.3.1.251" evidence="1"/>
<dbReference type="EMBL" id="CP001828">
    <property type="protein sequence ID" value="ADG23271.1"/>
    <property type="molecule type" value="Genomic_DNA"/>
</dbReference>
<dbReference type="RefSeq" id="WP_013100946.1">
    <property type="nucleotide sequence ID" value="NC_014125.1"/>
</dbReference>
<dbReference type="SMR" id="D5T5P7"/>
<dbReference type="KEGG" id="lpa:lpa_00034"/>
<dbReference type="HOGENOM" id="CLU_104099_0_0_6"/>
<dbReference type="GO" id="GO:0009279">
    <property type="term" value="C:cell outer membrane"/>
    <property type="evidence" value="ECO:0007669"/>
    <property type="project" value="UniProtKB-SubCell"/>
</dbReference>
<dbReference type="GO" id="GO:0016746">
    <property type="term" value="F:acyltransferase activity"/>
    <property type="evidence" value="ECO:0007669"/>
    <property type="project" value="UniProtKB-UniRule"/>
</dbReference>
<dbReference type="GO" id="GO:0009245">
    <property type="term" value="P:lipid A biosynthetic process"/>
    <property type="evidence" value="ECO:0007669"/>
    <property type="project" value="UniProtKB-UniRule"/>
</dbReference>
<dbReference type="Gene3D" id="2.40.160.20">
    <property type="match status" value="1"/>
</dbReference>
<dbReference type="HAMAP" id="MF_00837">
    <property type="entry name" value="PagP_transferase"/>
    <property type="match status" value="1"/>
</dbReference>
<dbReference type="InterPro" id="IPR009746">
    <property type="entry name" value="LipidA_acyl_PagP"/>
</dbReference>
<dbReference type="InterPro" id="IPR011250">
    <property type="entry name" value="OMP/PagP_b-brl"/>
</dbReference>
<dbReference type="NCBIfam" id="NF008271">
    <property type="entry name" value="PRK11045.1"/>
    <property type="match status" value="1"/>
</dbReference>
<dbReference type="Pfam" id="PF07017">
    <property type="entry name" value="PagP"/>
    <property type="match status" value="1"/>
</dbReference>
<dbReference type="SUPFAM" id="SSF56925">
    <property type="entry name" value="OMPA-like"/>
    <property type="match status" value="1"/>
</dbReference>
<gene>
    <name evidence="1" type="primary">pagP</name>
    <name type="ordered locus">lpa_00034</name>
</gene>
<organism>
    <name type="scientific">Legionella pneumophila serogroup 1 (strain 2300/99 Alcoy)</name>
    <dbReference type="NCBI Taxonomy" id="423212"/>
    <lineage>
        <taxon>Bacteria</taxon>
        <taxon>Pseudomonadati</taxon>
        <taxon>Pseudomonadota</taxon>
        <taxon>Gammaproteobacteria</taxon>
        <taxon>Legionellales</taxon>
        <taxon>Legionellaceae</taxon>
        <taxon>Legionella</taxon>
    </lineage>
</organism>